<sequence>MNFLAHLHLAHLAESSLSGNLLADFVRGNPEESFPPDVVAGIHMHRRIDVLTDNLPEVREAREWFRNETRRVAPITLDVMWDHFLSRHWSQLSPDFPLQEFTCYAREQVMTILPDSPPRFINLNNYLWSERWLVRYRDMDFIQSVLNGMASRRPRLDALRDSWYDLDAHYDALETRFWQFYPRMMEQASRKAL</sequence>
<feature type="chain" id="PRO_1000070624" description="Acyl carrier protein phosphodiesterase">
    <location>
        <begin position="1"/>
        <end position="193"/>
    </location>
</feature>
<evidence type="ECO:0000255" key="1">
    <source>
        <dbReference type="HAMAP-Rule" id="MF_01950"/>
    </source>
</evidence>
<proteinExistence type="inferred from homology"/>
<protein>
    <recommendedName>
        <fullName evidence="1">Acyl carrier protein phosphodiesterase</fullName>
        <shortName evidence="1">ACP phosphodiesterase</shortName>
        <ecNumber evidence="1">3.1.4.14</ecNumber>
    </recommendedName>
</protein>
<keyword id="KW-0275">Fatty acid biosynthesis</keyword>
<keyword id="KW-0276">Fatty acid metabolism</keyword>
<keyword id="KW-0378">Hydrolase</keyword>
<keyword id="KW-0444">Lipid biosynthesis</keyword>
<keyword id="KW-0443">Lipid metabolism</keyword>
<gene>
    <name evidence="1" type="primary">acpH</name>
    <name type="ordered locus">ECP_0463</name>
</gene>
<dbReference type="EC" id="3.1.4.14" evidence="1"/>
<dbReference type="EMBL" id="CP000247">
    <property type="protein sequence ID" value="ABG68494.1"/>
    <property type="molecule type" value="Genomic_DNA"/>
</dbReference>
<dbReference type="RefSeq" id="WP_001009872.1">
    <property type="nucleotide sequence ID" value="NC_008253.1"/>
</dbReference>
<dbReference type="SMR" id="Q0TKN7"/>
<dbReference type="KEGG" id="ecp:ECP_0463"/>
<dbReference type="HOGENOM" id="CLU_099370_1_0_6"/>
<dbReference type="Proteomes" id="UP000009182">
    <property type="component" value="Chromosome"/>
</dbReference>
<dbReference type="GO" id="GO:0008770">
    <property type="term" value="F:[acyl-carrier-protein] phosphodiesterase activity"/>
    <property type="evidence" value="ECO:0007669"/>
    <property type="project" value="UniProtKB-UniRule"/>
</dbReference>
<dbReference type="GO" id="GO:0006633">
    <property type="term" value="P:fatty acid biosynthetic process"/>
    <property type="evidence" value="ECO:0007669"/>
    <property type="project" value="UniProtKB-UniRule"/>
</dbReference>
<dbReference type="HAMAP" id="MF_01950">
    <property type="entry name" value="AcpH"/>
    <property type="match status" value="1"/>
</dbReference>
<dbReference type="InterPro" id="IPR007431">
    <property type="entry name" value="ACP_PD"/>
</dbReference>
<dbReference type="InterPro" id="IPR023491">
    <property type="entry name" value="ACP_phosphodiesterase_gpbac"/>
</dbReference>
<dbReference type="NCBIfam" id="NF007466">
    <property type="entry name" value="PRK10045.1"/>
    <property type="match status" value="1"/>
</dbReference>
<dbReference type="PANTHER" id="PTHR38764">
    <property type="entry name" value="ACYL CARRIER PROTEIN PHOSPHODIESTERASE"/>
    <property type="match status" value="1"/>
</dbReference>
<dbReference type="PANTHER" id="PTHR38764:SF1">
    <property type="entry name" value="ACYL CARRIER PROTEIN PHOSPHODIESTERASE"/>
    <property type="match status" value="1"/>
</dbReference>
<dbReference type="Pfam" id="PF04336">
    <property type="entry name" value="ACP_PD"/>
    <property type="match status" value="1"/>
</dbReference>
<dbReference type="PIRSF" id="PIRSF011489">
    <property type="entry name" value="DUF479"/>
    <property type="match status" value="1"/>
</dbReference>
<reference key="1">
    <citation type="journal article" date="2006" name="Mol. Microbiol.">
        <title>Role of pathogenicity island-associated integrases in the genome plasticity of uropathogenic Escherichia coli strain 536.</title>
        <authorList>
            <person name="Hochhut B."/>
            <person name="Wilde C."/>
            <person name="Balling G."/>
            <person name="Middendorf B."/>
            <person name="Dobrindt U."/>
            <person name="Brzuszkiewicz E."/>
            <person name="Gottschalk G."/>
            <person name="Carniel E."/>
            <person name="Hacker J."/>
        </authorList>
    </citation>
    <scope>NUCLEOTIDE SEQUENCE [LARGE SCALE GENOMIC DNA]</scope>
    <source>
        <strain>536 / UPEC</strain>
    </source>
</reference>
<accession>Q0TKN7</accession>
<comment type="function">
    <text evidence="1">Converts holo-ACP to apo-ACP by hydrolytic cleavage of the phosphopantetheine prosthetic group from ACP.</text>
</comment>
<comment type="catalytic activity">
    <reaction evidence="1">
        <text>holo-[ACP] + H2O = apo-[ACP] + (R)-4'-phosphopantetheine + H(+)</text>
        <dbReference type="Rhea" id="RHEA:20537"/>
        <dbReference type="Rhea" id="RHEA-COMP:9685"/>
        <dbReference type="Rhea" id="RHEA-COMP:9690"/>
        <dbReference type="ChEBI" id="CHEBI:15377"/>
        <dbReference type="ChEBI" id="CHEBI:15378"/>
        <dbReference type="ChEBI" id="CHEBI:29999"/>
        <dbReference type="ChEBI" id="CHEBI:61723"/>
        <dbReference type="ChEBI" id="CHEBI:64479"/>
        <dbReference type="EC" id="3.1.4.14"/>
    </reaction>
</comment>
<comment type="similarity">
    <text evidence="1">Belongs to the AcpH family.</text>
</comment>
<organism>
    <name type="scientific">Escherichia coli O6:K15:H31 (strain 536 / UPEC)</name>
    <dbReference type="NCBI Taxonomy" id="362663"/>
    <lineage>
        <taxon>Bacteria</taxon>
        <taxon>Pseudomonadati</taxon>
        <taxon>Pseudomonadota</taxon>
        <taxon>Gammaproteobacteria</taxon>
        <taxon>Enterobacterales</taxon>
        <taxon>Enterobacteriaceae</taxon>
        <taxon>Escherichia</taxon>
    </lineage>
</organism>
<name>ACPH_ECOL5</name>